<accession>Q23092</accession>
<reference key="1">
    <citation type="journal article" date="1998" name="Science">
        <title>Genome sequence of the nematode C. elegans: a platform for investigating biology.</title>
        <authorList>
            <consortium name="The C. elegans sequencing consortium"/>
        </authorList>
    </citation>
    <scope>NUCLEOTIDE SEQUENCE [LARGE SCALE GENOMIC DNA]</scope>
    <source>
        <strain>Bristol N2</strain>
    </source>
</reference>
<evidence type="ECO:0000305" key="1"/>
<comment type="similarity">
    <text evidence="1">Belongs to the calycin superfamily. Fatty-acid binding protein (FABP) family.</text>
</comment>
<dbReference type="EMBL" id="FO080684">
    <property type="protein sequence ID" value="CCD65781.1"/>
    <property type="molecule type" value="Genomic_DNA"/>
</dbReference>
<dbReference type="PIR" id="B89114">
    <property type="entry name" value="B89114"/>
</dbReference>
<dbReference type="RefSeq" id="NP_505016.1">
    <property type="nucleotide sequence ID" value="NM_072615.5"/>
</dbReference>
<dbReference type="SMR" id="Q23092"/>
<dbReference type="BioGRID" id="44204">
    <property type="interactions" value="6"/>
</dbReference>
<dbReference type="FunCoup" id="Q23092">
    <property type="interactions" value="189"/>
</dbReference>
<dbReference type="STRING" id="6239.ZK742.5.2"/>
<dbReference type="PaxDb" id="6239-ZK742.5.1"/>
<dbReference type="PeptideAtlas" id="Q23092"/>
<dbReference type="EnsemblMetazoa" id="ZK742.5.1">
    <property type="protein sequence ID" value="ZK742.5.1"/>
    <property type="gene ID" value="WBGene00002256"/>
</dbReference>
<dbReference type="GeneID" id="179161"/>
<dbReference type="KEGG" id="cel:CELE_ZK742.5"/>
<dbReference type="UCSC" id="ZK742.5.1">
    <property type="organism name" value="c. elegans"/>
</dbReference>
<dbReference type="AGR" id="WB:WBGene00002256"/>
<dbReference type="CTD" id="179161"/>
<dbReference type="WormBase" id="ZK742.5">
    <property type="protein sequence ID" value="CE07641"/>
    <property type="gene ID" value="WBGene00002256"/>
    <property type="gene designation" value="lbp-4"/>
</dbReference>
<dbReference type="eggNOG" id="KOG4015">
    <property type="taxonomic scope" value="Eukaryota"/>
</dbReference>
<dbReference type="GeneTree" id="ENSGT00390000007345"/>
<dbReference type="HOGENOM" id="CLU_113772_2_1_1"/>
<dbReference type="InParanoid" id="Q23092"/>
<dbReference type="OMA" id="QNQLVMR"/>
<dbReference type="OrthoDB" id="412780at2759"/>
<dbReference type="PhylomeDB" id="Q23092"/>
<dbReference type="PRO" id="PR:Q23092"/>
<dbReference type="Proteomes" id="UP000001940">
    <property type="component" value="Chromosome V"/>
</dbReference>
<dbReference type="Bgee" id="WBGene00002256">
    <property type="expression patterns" value="Expressed in germ line (C elegans) and 4 other cell types or tissues"/>
</dbReference>
<dbReference type="GO" id="GO:0008289">
    <property type="term" value="F:lipid binding"/>
    <property type="evidence" value="ECO:0007669"/>
    <property type="project" value="UniProtKB-KW"/>
</dbReference>
<dbReference type="CDD" id="cd00742">
    <property type="entry name" value="FABP"/>
    <property type="match status" value="1"/>
</dbReference>
<dbReference type="Gene3D" id="2.40.128.20">
    <property type="match status" value="1"/>
</dbReference>
<dbReference type="InterPro" id="IPR012674">
    <property type="entry name" value="Calycin"/>
</dbReference>
<dbReference type="InterPro" id="IPR000463">
    <property type="entry name" value="Fatty_acid-bd"/>
</dbReference>
<dbReference type="InterPro" id="IPR040094">
    <property type="entry name" value="Lbp1-4"/>
</dbReference>
<dbReference type="PANTHER" id="PTHR22725">
    <property type="entry name" value="FATTY ACID-BINDING PROTEIN HOMOLOG 1-RELATED-RELATED"/>
    <property type="match status" value="1"/>
</dbReference>
<dbReference type="PANTHER" id="PTHR22725:SF4">
    <property type="entry name" value="FATTY ACID-BINDING PROTEIN HOMOLOG 4"/>
    <property type="match status" value="1"/>
</dbReference>
<dbReference type="PRINTS" id="PR00178">
    <property type="entry name" value="FATTYACIDBP"/>
</dbReference>
<dbReference type="SUPFAM" id="SSF50814">
    <property type="entry name" value="Lipocalins"/>
    <property type="match status" value="1"/>
</dbReference>
<dbReference type="PROSITE" id="PS00214">
    <property type="entry name" value="FABP"/>
    <property type="match status" value="1"/>
</dbReference>
<proteinExistence type="inferred from homology"/>
<keyword id="KW-0446">Lipid-binding</keyword>
<keyword id="KW-1185">Reference proteome</keyword>
<keyword id="KW-0813">Transport</keyword>
<protein>
    <recommendedName>
        <fullName>Fatty acid-binding protein homolog 4</fullName>
    </recommendedName>
</protein>
<feature type="chain" id="PRO_0000067422" description="Fatty acid-binding protein homolog 4">
    <location>
        <begin position="1"/>
        <end position="145"/>
    </location>
</feature>
<sequence>MSVPDKFFGRYQLDKSENFDEFLSSKGVNWFVRQMIKLAGLTKIISQNQEAGKYNMENLTSKKNTNYQAWELGKKFEAPGLDGNQHEITFDFKDEILSEHHIRLNEPETSAETYFYTIDDQNQLVMRMENNGIVCRRWFKRVEQK</sequence>
<organism>
    <name type="scientific">Caenorhabditis elegans</name>
    <dbReference type="NCBI Taxonomy" id="6239"/>
    <lineage>
        <taxon>Eukaryota</taxon>
        <taxon>Metazoa</taxon>
        <taxon>Ecdysozoa</taxon>
        <taxon>Nematoda</taxon>
        <taxon>Chromadorea</taxon>
        <taxon>Rhabditida</taxon>
        <taxon>Rhabditina</taxon>
        <taxon>Rhabditomorpha</taxon>
        <taxon>Rhabditoidea</taxon>
        <taxon>Rhabditidae</taxon>
        <taxon>Peloderinae</taxon>
        <taxon>Caenorhabditis</taxon>
    </lineage>
</organism>
<gene>
    <name type="primary">lbp-4</name>
    <name type="ORF">ZK742.5</name>
</gene>
<name>FABP4_CAEEL</name>